<sequence length="435" mass="47540">MRVLILGSGVIGTTSAWYLSKAGCEVVVVDRQSGAGLETSYANGGQLSFGYTSPWAAPGVPLKAVRWLFERHAPLSIRPTTDWNQYVWLARMLRHCSAERYAVNKSRMLRLSEYSREALEALSAETGITFEGRRLGTIQLFRTQQQLDGAVRDIELLTQYGIPYEVLSPHQLAKFEPGLADGSVRFVGALRLPHDQTGDCCLFTQRLAALAAKRGVEFRYGCTVQRLEVDGPRVTGAWINGALERADCCVVALGSYSPLLLAPLGLRLPVYPLKGFSLTLPMIDASRAPVSTVLDESYKVAVTRFDERIRVAGMAEVSGYDVSLNPRRRSTLEMVVQDVYPGCGDLGRGEFWTGLRPATPDGTPVIGATPYQGLFLNTGHGTLGWTMSSGSGRYLADLICCRPCEISSEGLDMFRYLVSTIPCPQECAPCVPPTP</sequence>
<organism>
    <name type="scientific">Xylella fastidiosa (strain M23)</name>
    <dbReference type="NCBI Taxonomy" id="405441"/>
    <lineage>
        <taxon>Bacteria</taxon>
        <taxon>Pseudomonadati</taxon>
        <taxon>Pseudomonadota</taxon>
        <taxon>Gammaproteobacteria</taxon>
        <taxon>Lysobacterales</taxon>
        <taxon>Lysobacteraceae</taxon>
        <taxon>Xylella</taxon>
    </lineage>
</organism>
<gene>
    <name evidence="1" type="primary">dadA</name>
    <name type="ordered locus">XfasM23_1924</name>
</gene>
<proteinExistence type="inferred from homology"/>
<protein>
    <recommendedName>
        <fullName evidence="1">D-amino acid dehydrogenase</fullName>
        <ecNumber evidence="1">1.4.99.-</ecNumber>
    </recommendedName>
</protein>
<evidence type="ECO:0000255" key="1">
    <source>
        <dbReference type="HAMAP-Rule" id="MF_01202"/>
    </source>
</evidence>
<name>DADA_XYLF2</name>
<reference key="1">
    <citation type="journal article" date="2010" name="J. Bacteriol.">
        <title>Whole genome sequences of two Xylella fastidiosa strains (M12 and M23) causing almond leaf scorch disease in California.</title>
        <authorList>
            <person name="Chen J."/>
            <person name="Xie G."/>
            <person name="Han S."/>
            <person name="Chertkov O."/>
            <person name="Sims D."/>
            <person name="Civerolo E.L."/>
        </authorList>
    </citation>
    <scope>NUCLEOTIDE SEQUENCE [LARGE SCALE GENOMIC DNA]</scope>
    <source>
        <strain>M23</strain>
    </source>
</reference>
<keyword id="KW-0274">FAD</keyword>
<keyword id="KW-0285">Flavoprotein</keyword>
<keyword id="KW-0560">Oxidoreductase</keyword>
<accession>B2I8Y3</accession>
<comment type="function">
    <text evidence="1">Oxidative deamination of D-amino acids.</text>
</comment>
<comment type="catalytic activity">
    <reaction evidence="1">
        <text>a D-alpha-amino acid + A + H2O = a 2-oxocarboxylate + AH2 + NH4(+)</text>
        <dbReference type="Rhea" id="RHEA:18125"/>
        <dbReference type="ChEBI" id="CHEBI:13193"/>
        <dbReference type="ChEBI" id="CHEBI:15377"/>
        <dbReference type="ChEBI" id="CHEBI:17499"/>
        <dbReference type="ChEBI" id="CHEBI:28938"/>
        <dbReference type="ChEBI" id="CHEBI:35179"/>
        <dbReference type="ChEBI" id="CHEBI:59871"/>
    </reaction>
</comment>
<comment type="cofactor">
    <cofactor evidence="1">
        <name>FAD</name>
        <dbReference type="ChEBI" id="CHEBI:57692"/>
    </cofactor>
</comment>
<comment type="pathway">
    <text>Amino-acid degradation; D-alanine degradation; NH(3) and pyruvate from D-alanine: step 1/1.</text>
</comment>
<comment type="similarity">
    <text evidence="1">Belongs to the DadA oxidoreductase family.</text>
</comment>
<dbReference type="EC" id="1.4.99.-" evidence="1"/>
<dbReference type="EMBL" id="CP001011">
    <property type="protein sequence ID" value="ACB93324.1"/>
    <property type="molecule type" value="Genomic_DNA"/>
</dbReference>
<dbReference type="RefSeq" id="WP_004088180.1">
    <property type="nucleotide sequence ID" value="NC_010577.1"/>
</dbReference>
<dbReference type="SMR" id="B2I8Y3"/>
<dbReference type="KEGG" id="xfn:XfasM23_1924"/>
<dbReference type="HOGENOM" id="CLU_007884_9_2_6"/>
<dbReference type="UniPathway" id="UPA00043">
    <property type="reaction ID" value="UER00498"/>
</dbReference>
<dbReference type="Proteomes" id="UP000001698">
    <property type="component" value="Chromosome"/>
</dbReference>
<dbReference type="GO" id="GO:0005737">
    <property type="term" value="C:cytoplasm"/>
    <property type="evidence" value="ECO:0007669"/>
    <property type="project" value="TreeGrafter"/>
</dbReference>
<dbReference type="GO" id="GO:0005886">
    <property type="term" value="C:plasma membrane"/>
    <property type="evidence" value="ECO:0007669"/>
    <property type="project" value="TreeGrafter"/>
</dbReference>
<dbReference type="GO" id="GO:0008718">
    <property type="term" value="F:D-amino-acid dehydrogenase activity"/>
    <property type="evidence" value="ECO:0007669"/>
    <property type="project" value="UniProtKB-UniRule"/>
</dbReference>
<dbReference type="GO" id="GO:0055130">
    <property type="term" value="P:D-alanine catabolic process"/>
    <property type="evidence" value="ECO:0007669"/>
    <property type="project" value="UniProtKB-UniPathway"/>
</dbReference>
<dbReference type="FunFam" id="3.50.50.60:FF:000020">
    <property type="entry name" value="D-amino acid dehydrogenase"/>
    <property type="match status" value="1"/>
</dbReference>
<dbReference type="Gene3D" id="3.30.9.10">
    <property type="entry name" value="D-Amino Acid Oxidase, subunit A, domain 2"/>
    <property type="match status" value="1"/>
</dbReference>
<dbReference type="Gene3D" id="3.50.50.60">
    <property type="entry name" value="FAD/NAD(P)-binding domain"/>
    <property type="match status" value="2"/>
</dbReference>
<dbReference type="HAMAP" id="MF_01202">
    <property type="entry name" value="DadA"/>
    <property type="match status" value="1"/>
</dbReference>
<dbReference type="InterPro" id="IPR023080">
    <property type="entry name" value="DadA"/>
</dbReference>
<dbReference type="InterPro" id="IPR006076">
    <property type="entry name" value="FAD-dep_OxRdtase"/>
</dbReference>
<dbReference type="InterPro" id="IPR036188">
    <property type="entry name" value="FAD/NAD-bd_sf"/>
</dbReference>
<dbReference type="NCBIfam" id="NF001933">
    <property type="entry name" value="PRK00711.1"/>
    <property type="match status" value="1"/>
</dbReference>
<dbReference type="PANTHER" id="PTHR13847:SF280">
    <property type="entry name" value="D-AMINO ACID DEHYDROGENASE"/>
    <property type="match status" value="1"/>
</dbReference>
<dbReference type="PANTHER" id="PTHR13847">
    <property type="entry name" value="SARCOSINE DEHYDROGENASE-RELATED"/>
    <property type="match status" value="1"/>
</dbReference>
<dbReference type="Pfam" id="PF01266">
    <property type="entry name" value="DAO"/>
    <property type="match status" value="1"/>
</dbReference>
<dbReference type="SUPFAM" id="SSF54373">
    <property type="entry name" value="FAD-linked reductases, C-terminal domain"/>
    <property type="match status" value="1"/>
</dbReference>
<dbReference type="SUPFAM" id="SSF51905">
    <property type="entry name" value="FAD/NAD(P)-binding domain"/>
    <property type="match status" value="1"/>
</dbReference>
<feature type="chain" id="PRO_1000138675" description="D-amino acid dehydrogenase">
    <location>
        <begin position="1"/>
        <end position="435"/>
    </location>
</feature>
<feature type="binding site" evidence="1">
    <location>
        <begin position="3"/>
        <end position="17"/>
    </location>
    <ligand>
        <name>FAD</name>
        <dbReference type="ChEBI" id="CHEBI:57692"/>
    </ligand>
</feature>